<name>CYB_RAPCU</name>
<gene>
    <name type="primary">MT-CYB</name>
    <name type="synonym">COB</name>
    <name type="synonym">CYTB</name>
    <name type="synonym">MTCYB</name>
</gene>
<proteinExistence type="inferred from homology"/>
<comment type="function">
    <text evidence="2">Component of the ubiquinol-cytochrome c reductase complex (complex III or cytochrome b-c1 complex) that is part of the mitochondrial respiratory chain. The b-c1 complex mediates electron transfer from ubiquinol to cytochrome c. Contributes to the generation of a proton gradient across the mitochondrial membrane that is then used for ATP synthesis.</text>
</comment>
<comment type="cofactor">
    <cofactor evidence="2">
        <name>heme b</name>
        <dbReference type="ChEBI" id="CHEBI:60344"/>
    </cofactor>
    <text evidence="2">Binds 2 heme b groups non-covalently.</text>
</comment>
<comment type="subunit">
    <text evidence="2">The cytochrome bc1 complex contains 11 subunits: 3 respiratory subunits (MT-CYB, CYC1 and UQCRFS1), 2 core proteins (UQCRC1 and UQCRC2) and 6 low-molecular weight proteins (UQCRH/QCR6, UQCRB/QCR7, UQCRQ/QCR8, UQCR10/QCR9, UQCR11/QCR10 and a cleavage product of UQCRFS1). This cytochrome bc1 complex then forms a dimer.</text>
</comment>
<comment type="subcellular location">
    <subcellularLocation>
        <location evidence="2">Mitochondrion inner membrane</location>
        <topology evidence="2">Multi-pass membrane protein</topology>
    </subcellularLocation>
</comment>
<comment type="miscellaneous">
    <text evidence="1">Heme 1 (or BL or b562) is low-potential and absorbs at about 562 nm, and heme 2 (or BH or b566) is high-potential and absorbs at about 566 nm.</text>
</comment>
<comment type="similarity">
    <text evidence="3 4">Belongs to the cytochrome b family.</text>
</comment>
<comment type="caution">
    <text evidence="2">The full-length protein contains only eight transmembrane helices, not nine as predicted by bioinformatics tools.</text>
</comment>
<feature type="chain" id="PRO_0000061489" description="Cytochrome b">
    <location>
        <begin position="1" status="less than"/>
        <end position="267" status="greater than"/>
    </location>
</feature>
<feature type="transmembrane region" description="Helical" evidence="2">
    <location>
        <begin position="4"/>
        <end position="24"/>
    </location>
</feature>
<feature type="transmembrane region" description="Helical" evidence="2">
    <location>
        <begin position="48"/>
        <end position="69"/>
    </location>
</feature>
<feature type="transmembrane region" description="Helical" evidence="2">
    <location>
        <begin position="84"/>
        <end position="104"/>
    </location>
</feature>
<feature type="transmembrane region" description="Helical" evidence="2">
    <location>
        <begin position="149"/>
        <end position="169"/>
    </location>
</feature>
<feature type="transmembrane region" description="Helical" evidence="2">
    <location>
        <begin position="197"/>
        <end position="217"/>
    </location>
</feature>
<feature type="transmembrane region" description="Helical" evidence="2">
    <location>
        <begin position="259"/>
        <end position="267" status="greater than"/>
    </location>
</feature>
<feature type="binding site" description="axial binding residue" evidence="2">
    <location>
        <position position="54"/>
    </location>
    <ligand>
        <name>heme b</name>
        <dbReference type="ChEBI" id="CHEBI:60344"/>
        <label>b562</label>
    </ligand>
    <ligandPart>
        <name>Fe</name>
        <dbReference type="ChEBI" id="CHEBI:18248"/>
    </ligandPart>
</feature>
<feature type="binding site" description="axial binding residue" evidence="2">
    <location>
        <position position="68"/>
    </location>
    <ligand>
        <name>heme b</name>
        <dbReference type="ChEBI" id="CHEBI:60344"/>
        <label>b566</label>
    </ligand>
    <ligandPart>
        <name>Fe</name>
        <dbReference type="ChEBI" id="CHEBI:18248"/>
    </ligandPart>
</feature>
<feature type="binding site" description="axial binding residue" evidence="2">
    <location>
        <position position="153"/>
    </location>
    <ligand>
        <name>heme b</name>
        <dbReference type="ChEBI" id="CHEBI:60344"/>
        <label>b562</label>
    </ligand>
    <ligandPart>
        <name>Fe</name>
        <dbReference type="ChEBI" id="CHEBI:18248"/>
    </ligandPart>
</feature>
<feature type="binding site" description="axial binding residue" evidence="2">
    <location>
        <position position="167"/>
    </location>
    <ligand>
        <name>heme b</name>
        <dbReference type="ChEBI" id="CHEBI:60344"/>
        <label>b566</label>
    </ligand>
    <ligandPart>
        <name>Fe</name>
        <dbReference type="ChEBI" id="CHEBI:18248"/>
    </ligandPart>
</feature>
<feature type="binding site" evidence="2">
    <location>
        <position position="172"/>
    </location>
    <ligand>
        <name>a ubiquinone</name>
        <dbReference type="ChEBI" id="CHEBI:16389"/>
    </ligand>
</feature>
<feature type="non-terminal residue">
    <location>
        <position position="1"/>
    </location>
</feature>
<feature type="non-terminal residue">
    <location>
        <position position="267"/>
    </location>
</feature>
<sequence length="267" mass="29830">WWNFGSLLGICLMTQILTGLLLAAHYTADTTLAFSSVAHTCRDVQYGWLIRNLHANGASFFFICIYLHIGRGLYYGSYLYKETWNTGVILLLTLMATAFVGYVLPWGQMSFWGATVITNLFSAIPYIGQTIVEWAWGGFSVDNPTLTRFFTLHFLLPFMIAGLTIIHLTFLHESGSNNPLGISSNCDKIPFHPYFSLKDILGFTLMFLPLMTLALFAPNLLGDPENFTPANPLVTPPHIKPEWYFLFAYAILRSIPNKLGGVLALAA</sequence>
<geneLocation type="mitochondrion"/>
<accession>Q8SG72</accession>
<evidence type="ECO:0000250" key="1"/>
<evidence type="ECO:0000250" key="2">
    <source>
        <dbReference type="UniProtKB" id="P00157"/>
    </source>
</evidence>
<evidence type="ECO:0000255" key="3">
    <source>
        <dbReference type="PROSITE-ProRule" id="PRU00967"/>
    </source>
</evidence>
<evidence type="ECO:0000255" key="4">
    <source>
        <dbReference type="PROSITE-ProRule" id="PRU00968"/>
    </source>
</evidence>
<keyword id="KW-0249">Electron transport</keyword>
<keyword id="KW-0952">Extinct organism protein</keyword>
<keyword id="KW-0349">Heme</keyword>
<keyword id="KW-0408">Iron</keyword>
<keyword id="KW-0472">Membrane</keyword>
<keyword id="KW-0479">Metal-binding</keyword>
<keyword id="KW-0496">Mitochondrion</keyword>
<keyword id="KW-0999">Mitochondrion inner membrane</keyword>
<keyword id="KW-0679">Respiratory chain</keyword>
<keyword id="KW-0812">Transmembrane</keyword>
<keyword id="KW-1133">Transmembrane helix</keyword>
<keyword id="KW-0813">Transport</keyword>
<keyword id="KW-0830">Ubiquinone</keyword>
<dbReference type="EMBL" id="AF483338">
    <property type="protein sequence ID" value="AAM19505.1"/>
    <property type="molecule type" value="Genomic_DNA"/>
</dbReference>
<dbReference type="SMR" id="Q8SG72"/>
<dbReference type="GO" id="GO:0005743">
    <property type="term" value="C:mitochondrial inner membrane"/>
    <property type="evidence" value="ECO:0007669"/>
    <property type="project" value="UniProtKB-SubCell"/>
</dbReference>
<dbReference type="GO" id="GO:0046872">
    <property type="term" value="F:metal ion binding"/>
    <property type="evidence" value="ECO:0007669"/>
    <property type="project" value="UniProtKB-KW"/>
</dbReference>
<dbReference type="GO" id="GO:0008121">
    <property type="term" value="F:ubiquinol-cytochrome-c reductase activity"/>
    <property type="evidence" value="ECO:0007669"/>
    <property type="project" value="TreeGrafter"/>
</dbReference>
<dbReference type="GO" id="GO:0006122">
    <property type="term" value="P:mitochondrial electron transport, ubiquinol to cytochrome c"/>
    <property type="evidence" value="ECO:0007669"/>
    <property type="project" value="TreeGrafter"/>
</dbReference>
<dbReference type="CDD" id="cd00290">
    <property type="entry name" value="cytochrome_b_C"/>
    <property type="match status" value="1"/>
</dbReference>
<dbReference type="CDD" id="cd00284">
    <property type="entry name" value="Cytochrome_b_N"/>
    <property type="match status" value="1"/>
</dbReference>
<dbReference type="Gene3D" id="1.20.810.10">
    <property type="entry name" value="Cytochrome Bc1 Complex, Chain C"/>
    <property type="match status" value="1"/>
</dbReference>
<dbReference type="InterPro" id="IPR005798">
    <property type="entry name" value="Cyt_b/b6_C"/>
</dbReference>
<dbReference type="InterPro" id="IPR036150">
    <property type="entry name" value="Cyt_b/b6_C_sf"/>
</dbReference>
<dbReference type="InterPro" id="IPR005797">
    <property type="entry name" value="Cyt_b/b6_N"/>
</dbReference>
<dbReference type="InterPro" id="IPR027387">
    <property type="entry name" value="Cytb/b6-like_sf"/>
</dbReference>
<dbReference type="InterPro" id="IPR048260">
    <property type="entry name" value="Cytochrome_b_C_euk/bac"/>
</dbReference>
<dbReference type="InterPro" id="IPR048259">
    <property type="entry name" value="Cytochrome_b_N_euk/bac"/>
</dbReference>
<dbReference type="InterPro" id="IPR016174">
    <property type="entry name" value="Di-haem_cyt_TM"/>
</dbReference>
<dbReference type="PANTHER" id="PTHR19271">
    <property type="entry name" value="CYTOCHROME B"/>
    <property type="match status" value="1"/>
</dbReference>
<dbReference type="PANTHER" id="PTHR19271:SF16">
    <property type="entry name" value="CYTOCHROME B"/>
    <property type="match status" value="1"/>
</dbReference>
<dbReference type="Pfam" id="PF00032">
    <property type="entry name" value="Cytochrom_B_C"/>
    <property type="match status" value="1"/>
</dbReference>
<dbReference type="Pfam" id="PF00033">
    <property type="entry name" value="Cytochrome_B"/>
    <property type="match status" value="1"/>
</dbReference>
<dbReference type="SUPFAM" id="SSF81648">
    <property type="entry name" value="a domain/subunit of cytochrome bc1 complex (Ubiquinol-cytochrome c reductase)"/>
    <property type="match status" value="1"/>
</dbReference>
<dbReference type="SUPFAM" id="SSF81342">
    <property type="entry name" value="Transmembrane di-heme cytochromes"/>
    <property type="match status" value="1"/>
</dbReference>
<dbReference type="PROSITE" id="PS51003">
    <property type="entry name" value="CYTB_CTER"/>
    <property type="match status" value="1"/>
</dbReference>
<dbReference type="PROSITE" id="PS51002">
    <property type="entry name" value="CYTB_NTER"/>
    <property type="match status" value="1"/>
</dbReference>
<protein>
    <recommendedName>
        <fullName>Cytochrome b</fullName>
    </recommendedName>
    <alternativeName>
        <fullName>Complex III subunit 3</fullName>
    </alternativeName>
    <alternativeName>
        <fullName>Complex III subunit III</fullName>
    </alternativeName>
    <alternativeName>
        <fullName>Cytochrome b-c1 complex subunit 3</fullName>
    </alternativeName>
    <alternativeName>
        <fullName>Ubiquinol-cytochrome-c reductase complex cytochrome b subunit</fullName>
    </alternativeName>
</protein>
<organism>
    <name type="scientific">Raphus cucullatus</name>
    <name type="common">Dodo</name>
    <dbReference type="NCBI Taxonomy" id="187135"/>
    <lineage>
        <taxon>Eukaryota</taxon>
        <taxon>Metazoa</taxon>
        <taxon>Chordata</taxon>
        <taxon>Craniata</taxon>
        <taxon>Vertebrata</taxon>
        <taxon>Euteleostomi</taxon>
        <taxon>Archelosauria</taxon>
        <taxon>Archosauria</taxon>
        <taxon>Dinosauria</taxon>
        <taxon>Saurischia</taxon>
        <taxon>Theropoda</taxon>
        <taxon>Coelurosauria</taxon>
        <taxon>Aves</taxon>
        <taxon>Neognathae</taxon>
        <taxon>Neoaves</taxon>
        <taxon>Columbimorphae</taxon>
        <taxon>Columbiformes</taxon>
        <taxon>Raphidae</taxon>
        <taxon>Raphus</taxon>
    </lineage>
</organism>
<reference key="1">
    <citation type="journal article" date="2002" name="Science">
        <title>Flight of the dodo.</title>
        <authorList>
            <person name="Shapiro B."/>
            <person name="Sibthorpe D."/>
            <person name="Rambaut A."/>
            <person name="Austin J."/>
            <person name="Wragg G.M."/>
            <person name="Bininda-Emonds O.R."/>
            <person name="Lee P.L."/>
            <person name="Cooper A."/>
        </authorList>
    </citation>
    <scope>NUCLEOTIDE SEQUENCE [GENOMIC DNA]</scope>
</reference>